<accession>A6VQ53</accession>
<evidence type="ECO:0000255" key="1">
    <source>
        <dbReference type="HAMAP-Rule" id="MF_00021"/>
    </source>
</evidence>
<proteinExistence type="inferred from homology"/>
<reference key="1">
    <citation type="journal article" date="2010" name="BMC Genomics">
        <title>A genomic perspective on the potential of Actinobacillus succinogenes for industrial succinate production.</title>
        <authorList>
            <person name="McKinlay J.B."/>
            <person name="Laivenieks M."/>
            <person name="Schindler B.D."/>
            <person name="McKinlay A.A."/>
            <person name="Siddaramappa S."/>
            <person name="Challacombe J.F."/>
            <person name="Lowry S.R."/>
            <person name="Clum A."/>
            <person name="Lapidus A.L."/>
            <person name="Burkhart K.B."/>
            <person name="Harkins V."/>
            <person name="Vieille C."/>
        </authorList>
    </citation>
    <scope>NUCLEOTIDE SEQUENCE [LARGE SCALE GENOMIC DNA]</scope>
    <source>
        <strain>ATCC 55618 / DSM 22257 / CCUG 43843 / 130Z</strain>
    </source>
</reference>
<feature type="chain" id="PRO_1000074197" description="tRNA sulfurtransferase">
    <location>
        <begin position="1"/>
        <end position="484"/>
    </location>
</feature>
<feature type="domain" description="THUMP" evidence="1">
    <location>
        <begin position="61"/>
        <end position="166"/>
    </location>
</feature>
<feature type="domain" description="Rhodanese" evidence="1">
    <location>
        <begin position="404"/>
        <end position="483"/>
    </location>
</feature>
<feature type="active site" description="Cysteine persulfide intermediate" evidence="1">
    <location>
        <position position="456"/>
    </location>
</feature>
<feature type="binding site" evidence="1">
    <location>
        <begin position="183"/>
        <end position="184"/>
    </location>
    <ligand>
        <name>ATP</name>
        <dbReference type="ChEBI" id="CHEBI:30616"/>
    </ligand>
</feature>
<feature type="binding site" evidence="1">
    <location>
        <position position="265"/>
    </location>
    <ligand>
        <name>ATP</name>
        <dbReference type="ChEBI" id="CHEBI:30616"/>
    </ligand>
</feature>
<feature type="binding site" evidence="1">
    <location>
        <position position="287"/>
    </location>
    <ligand>
        <name>ATP</name>
        <dbReference type="ChEBI" id="CHEBI:30616"/>
    </ligand>
</feature>
<feature type="binding site" evidence="1">
    <location>
        <position position="296"/>
    </location>
    <ligand>
        <name>ATP</name>
        <dbReference type="ChEBI" id="CHEBI:30616"/>
    </ligand>
</feature>
<feature type="disulfide bond" description="Redox-active" evidence="1">
    <location>
        <begin position="344"/>
        <end position="456"/>
    </location>
</feature>
<comment type="function">
    <text evidence="1">Catalyzes the ATP-dependent transfer of a sulfur to tRNA to produce 4-thiouridine in position 8 of tRNAs, which functions as a near-UV photosensor. Also catalyzes the transfer of sulfur to the sulfur carrier protein ThiS, forming ThiS-thiocarboxylate. This is a step in the synthesis of thiazole, in the thiamine biosynthesis pathway. The sulfur is donated as persulfide by IscS.</text>
</comment>
<comment type="catalytic activity">
    <reaction evidence="1">
        <text>[ThiI sulfur-carrier protein]-S-sulfanyl-L-cysteine + a uridine in tRNA + 2 reduced [2Fe-2S]-[ferredoxin] + ATP + H(+) = [ThiI sulfur-carrier protein]-L-cysteine + a 4-thiouridine in tRNA + 2 oxidized [2Fe-2S]-[ferredoxin] + AMP + diphosphate</text>
        <dbReference type="Rhea" id="RHEA:24176"/>
        <dbReference type="Rhea" id="RHEA-COMP:10000"/>
        <dbReference type="Rhea" id="RHEA-COMP:10001"/>
        <dbReference type="Rhea" id="RHEA-COMP:13337"/>
        <dbReference type="Rhea" id="RHEA-COMP:13338"/>
        <dbReference type="Rhea" id="RHEA-COMP:13339"/>
        <dbReference type="Rhea" id="RHEA-COMP:13340"/>
        <dbReference type="ChEBI" id="CHEBI:15378"/>
        <dbReference type="ChEBI" id="CHEBI:29950"/>
        <dbReference type="ChEBI" id="CHEBI:30616"/>
        <dbReference type="ChEBI" id="CHEBI:33019"/>
        <dbReference type="ChEBI" id="CHEBI:33737"/>
        <dbReference type="ChEBI" id="CHEBI:33738"/>
        <dbReference type="ChEBI" id="CHEBI:61963"/>
        <dbReference type="ChEBI" id="CHEBI:65315"/>
        <dbReference type="ChEBI" id="CHEBI:136798"/>
        <dbReference type="ChEBI" id="CHEBI:456215"/>
        <dbReference type="EC" id="2.8.1.4"/>
    </reaction>
</comment>
<comment type="catalytic activity">
    <reaction evidence="1">
        <text>[ThiS sulfur-carrier protein]-C-terminal Gly-Gly-AMP + S-sulfanyl-L-cysteinyl-[cysteine desulfurase] + AH2 = [ThiS sulfur-carrier protein]-C-terminal-Gly-aminoethanethioate + L-cysteinyl-[cysteine desulfurase] + A + AMP + 2 H(+)</text>
        <dbReference type="Rhea" id="RHEA:43340"/>
        <dbReference type="Rhea" id="RHEA-COMP:12157"/>
        <dbReference type="Rhea" id="RHEA-COMP:12158"/>
        <dbReference type="Rhea" id="RHEA-COMP:12910"/>
        <dbReference type="Rhea" id="RHEA-COMP:19908"/>
        <dbReference type="ChEBI" id="CHEBI:13193"/>
        <dbReference type="ChEBI" id="CHEBI:15378"/>
        <dbReference type="ChEBI" id="CHEBI:17499"/>
        <dbReference type="ChEBI" id="CHEBI:29950"/>
        <dbReference type="ChEBI" id="CHEBI:61963"/>
        <dbReference type="ChEBI" id="CHEBI:90618"/>
        <dbReference type="ChEBI" id="CHEBI:232372"/>
        <dbReference type="ChEBI" id="CHEBI:456215"/>
    </reaction>
</comment>
<comment type="pathway">
    <text evidence="1">Cofactor biosynthesis; thiamine diphosphate biosynthesis.</text>
</comment>
<comment type="subcellular location">
    <subcellularLocation>
        <location evidence="1">Cytoplasm</location>
    </subcellularLocation>
</comment>
<comment type="similarity">
    <text evidence="1">Belongs to the ThiI family.</text>
</comment>
<organism>
    <name type="scientific">Actinobacillus succinogenes (strain ATCC 55618 / DSM 22257 / CCUG 43843 / 130Z)</name>
    <dbReference type="NCBI Taxonomy" id="339671"/>
    <lineage>
        <taxon>Bacteria</taxon>
        <taxon>Pseudomonadati</taxon>
        <taxon>Pseudomonadota</taxon>
        <taxon>Gammaproteobacteria</taxon>
        <taxon>Pasteurellales</taxon>
        <taxon>Pasteurellaceae</taxon>
        <taxon>Actinobacillus</taxon>
    </lineage>
</organism>
<gene>
    <name evidence="1" type="primary">thiI</name>
    <name type="ordered locus">Asuc_1748</name>
</gene>
<sequence>MKFIIKLFPEIMIKSDSVRKRFIKILTGNIRNILDKHDDSVAVVRHWDFIEVRSKHEENRPHLIELLQCIPGIHHFLEVEERPFTDLHNIFEQTLERMRDELVDKTFCVRAKRRGKHSFSSLEIERYVGGGLNQHIETAKVKLKNPDVTVRIEVDNDKLLFIQARHEGIGGYPIGTQEDVLSLISGGFDSGVSSYMLIRRGSRVHYCFFNLGGAAHEIGVKQMVYHLWNRYGSSHKVRFIAINFEAVVGEILEKIDNGQMGVVLKRMMVRAAGKVAQRFAIEAIVTGEALGQVSSQTLTNLRLIDEAAGTLVLRPLITHDKEQIIAMAKQIGTEDIAKSMPEFCGVISKNPTVKAVRERILAEEEHFDFDILESAVQNAEYLDIRQIAEETAKGVVEIDGVSVLGENDVILDIRSPEETDENPLALENRQVIELPFYKVSSQFGELDQSKNYVLYCERGVMSKLQALYLKENGFNNVQVFVKAK</sequence>
<protein>
    <recommendedName>
        <fullName evidence="1">tRNA sulfurtransferase</fullName>
        <ecNumber evidence="1">2.8.1.4</ecNumber>
    </recommendedName>
    <alternativeName>
        <fullName evidence="1">Sulfur carrier protein ThiS sulfurtransferase</fullName>
    </alternativeName>
    <alternativeName>
        <fullName evidence="1">Thiamine biosynthesis protein ThiI</fullName>
    </alternativeName>
    <alternativeName>
        <fullName evidence="1">tRNA 4-thiouridine synthase</fullName>
    </alternativeName>
</protein>
<name>THII_ACTSZ</name>
<dbReference type="EC" id="2.8.1.4" evidence="1"/>
<dbReference type="EMBL" id="CP000746">
    <property type="protein sequence ID" value="ABR75100.1"/>
    <property type="molecule type" value="Genomic_DNA"/>
</dbReference>
<dbReference type="RefSeq" id="WP_012073477.1">
    <property type="nucleotide sequence ID" value="NC_009655.1"/>
</dbReference>
<dbReference type="SMR" id="A6VQ53"/>
<dbReference type="STRING" id="339671.Asuc_1748"/>
<dbReference type="KEGG" id="asu:Asuc_1748"/>
<dbReference type="eggNOG" id="COG0301">
    <property type="taxonomic scope" value="Bacteria"/>
</dbReference>
<dbReference type="eggNOG" id="COG0607">
    <property type="taxonomic scope" value="Bacteria"/>
</dbReference>
<dbReference type="HOGENOM" id="CLU_037952_4_1_6"/>
<dbReference type="OrthoDB" id="9773948at2"/>
<dbReference type="UniPathway" id="UPA00060"/>
<dbReference type="Proteomes" id="UP000001114">
    <property type="component" value="Chromosome"/>
</dbReference>
<dbReference type="GO" id="GO:0005829">
    <property type="term" value="C:cytosol"/>
    <property type="evidence" value="ECO:0007669"/>
    <property type="project" value="TreeGrafter"/>
</dbReference>
<dbReference type="GO" id="GO:0005524">
    <property type="term" value="F:ATP binding"/>
    <property type="evidence" value="ECO:0007669"/>
    <property type="project" value="UniProtKB-UniRule"/>
</dbReference>
<dbReference type="GO" id="GO:0004810">
    <property type="term" value="F:CCA tRNA nucleotidyltransferase activity"/>
    <property type="evidence" value="ECO:0007669"/>
    <property type="project" value="InterPro"/>
</dbReference>
<dbReference type="GO" id="GO:0000049">
    <property type="term" value="F:tRNA binding"/>
    <property type="evidence" value="ECO:0007669"/>
    <property type="project" value="UniProtKB-UniRule"/>
</dbReference>
<dbReference type="GO" id="GO:0140741">
    <property type="term" value="F:tRNA-uracil-4 sulfurtransferase activity"/>
    <property type="evidence" value="ECO:0007669"/>
    <property type="project" value="UniProtKB-EC"/>
</dbReference>
<dbReference type="GO" id="GO:0009228">
    <property type="term" value="P:thiamine biosynthetic process"/>
    <property type="evidence" value="ECO:0007669"/>
    <property type="project" value="UniProtKB-KW"/>
</dbReference>
<dbReference type="GO" id="GO:0009229">
    <property type="term" value="P:thiamine diphosphate biosynthetic process"/>
    <property type="evidence" value="ECO:0007669"/>
    <property type="project" value="UniProtKB-UniRule"/>
</dbReference>
<dbReference type="GO" id="GO:0052837">
    <property type="term" value="P:thiazole biosynthetic process"/>
    <property type="evidence" value="ECO:0007669"/>
    <property type="project" value="InterPro"/>
</dbReference>
<dbReference type="GO" id="GO:0002937">
    <property type="term" value="P:tRNA 4-thiouridine biosynthesis"/>
    <property type="evidence" value="ECO:0007669"/>
    <property type="project" value="TreeGrafter"/>
</dbReference>
<dbReference type="CDD" id="cd01712">
    <property type="entry name" value="PPase_ThiI"/>
    <property type="match status" value="1"/>
</dbReference>
<dbReference type="CDD" id="cd00158">
    <property type="entry name" value="RHOD"/>
    <property type="match status" value="1"/>
</dbReference>
<dbReference type="CDD" id="cd11716">
    <property type="entry name" value="THUMP_ThiI"/>
    <property type="match status" value="1"/>
</dbReference>
<dbReference type="FunFam" id="3.30.2130.30:FF:000002">
    <property type="entry name" value="tRNA sulfurtransferase"/>
    <property type="match status" value="1"/>
</dbReference>
<dbReference type="FunFam" id="3.40.50.620:FF:000029">
    <property type="entry name" value="tRNA sulfurtransferase"/>
    <property type="match status" value="1"/>
</dbReference>
<dbReference type="Gene3D" id="3.30.2130.30">
    <property type="match status" value="1"/>
</dbReference>
<dbReference type="Gene3D" id="3.40.50.620">
    <property type="entry name" value="HUPs"/>
    <property type="match status" value="1"/>
</dbReference>
<dbReference type="Gene3D" id="3.40.250.10">
    <property type="entry name" value="Rhodanese-like domain"/>
    <property type="match status" value="1"/>
</dbReference>
<dbReference type="HAMAP" id="MF_00021">
    <property type="entry name" value="ThiI"/>
    <property type="match status" value="1"/>
</dbReference>
<dbReference type="InterPro" id="IPR001763">
    <property type="entry name" value="Rhodanese-like_dom"/>
</dbReference>
<dbReference type="InterPro" id="IPR036873">
    <property type="entry name" value="Rhodanese-like_dom_sf"/>
</dbReference>
<dbReference type="InterPro" id="IPR014729">
    <property type="entry name" value="Rossmann-like_a/b/a_fold"/>
</dbReference>
<dbReference type="InterPro" id="IPR020536">
    <property type="entry name" value="ThiI_AANH"/>
</dbReference>
<dbReference type="InterPro" id="IPR054173">
    <property type="entry name" value="ThiI_fer"/>
</dbReference>
<dbReference type="InterPro" id="IPR049961">
    <property type="entry name" value="ThiI_N"/>
</dbReference>
<dbReference type="InterPro" id="IPR026340">
    <property type="entry name" value="THII_Thiazole_biosynth_dom"/>
</dbReference>
<dbReference type="InterPro" id="IPR004114">
    <property type="entry name" value="THUMP_dom"/>
</dbReference>
<dbReference type="InterPro" id="IPR049962">
    <property type="entry name" value="THUMP_ThiI"/>
</dbReference>
<dbReference type="InterPro" id="IPR003720">
    <property type="entry name" value="tRNA_STrfase"/>
</dbReference>
<dbReference type="InterPro" id="IPR050102">
    <property type="entry name" value="tRNA_sulfurtransferase_ThiI"/>
</dbReference>
<dbReference type="NCBIfam" id="TIGR04271">
    <property type="entry name" value="ThiI_C_thiazole"/>
    <property type="match status" value="1"/>
</dbReference>
<dbReference type="NCBIfam" id="TIGR00342">
    <property type="entry name" value="tRNA uracil 4-sulfurtransferase ThiI"/>
    <property type="match status" value="1"/>
</dbReference>
<dbReference type="PANTHER" id="PTHR43209">
    <property type="entry name" value="TRNA SULFURTRANSFERASE"/>
    <property type="match status" value="1"/>
</dbReference>
<dbReference type="PANTHER" id="PTHR43209:SF1">
    <property type="entry name" value="TRNA SULFURTRANSFERASE"/>
    <property type="match status" value="1"/>
</dbReference>
<dbReference type="Pfam" id="PF02568">
    <property type="entry name" value="ThiI"/>
    <property type="match status" value="1"/>
</dbReference>
<dbReference type="Pfam" id="PF22025">
    <property type="entry name" value="ThiI_fer"/>
    <property type="match status" value="1"/>
</dbReference>
<dbReference type="Pfam" id="PF02926">
    <property type="entry name" value="THUMP"/>
    <property type="match status" value="1"/>
</dbReference>
<dbReference type="SMART" id="SM00981">
    <property type="entry name" value="THUMP"/>
    <property type="match status" value="1"/>
</dbReference>
<dbReference type="SUPFAM" id="SSF52402">
    <property type="entry name" value="Adenine nucleotide alpha hydrolases-like"/>
    <property type="match status" value="1"/>
</dbReference>
<dbReference type="SUPFAM" id="SSF52821">
    <property type="entry name" value="Rhodanese/Cell cycle control phosphatase"/>
    <property type="match status" value="1"/>
</dbReference>
<dbReference type="SUPFAM" id="SSF143437">
    <property type="entry name" value="THUMP domain-like"/>
    <property type="match status" value="1"/>
</dbReference>
<dbReference type="PROSITE" id="PS50206">
    <property type="entry name" value="RHODANESE_3"/>
    <property type="match status" value="1"/>
</dbReference>
<dbReference type="PROSITE" id="PS51165">
    <property type="entry name" value="THUMP"/>
    <property type="match status" value="1"/>
</dbReference>
<keyword id="KW-0067">ATP-binding</keyword>
<keyword id="KW-0963">Cytoplasm</keyword>
<keyword id="KW-1015">Disulfide bond</keyword>
<keyword id="KW-0547">Nucleotide-binding</keyword>
<keyword id="KW-0676">Redox-active center</keyword>
<keyword id="KW-1185">Reference proteome</keyword>
<keyword id="KW-0694">RNA-binding</keyword>
<keyword id="KW-0784">Thiamine biosynthesis</keyword>
<keyword id="KW-0808">Transferase</keyword>
<keyword id="KW-0820">tRNA-binding</keyword>